<accession>A8MK45</accession>
<sequence>MKLKAIILAAGAGTRMKSKLPKVLHKVCGRTMLNHVIDVAKGSMVQECIVVVGHGAEDVKESLTPDVKTVLQKEQLGTGHALMMAEPYIDDGTILVLCGDGPLITEETLNRTVAYHREGNFKATVLTTDLANPKGLGRIVRNAEGQLEKIVEEKDATEEEKAIIEVNSGIYCFDGEILKEALPKLKNENAQKEYYLTDILSIIRNMGFGVGVYKLEEYEEIMAVNSREQLADVEAIMRRRIAKKHMANGVTIMNPEHVYIEKTVTIGADTILYPGVILTGNTVIGEDCIIGQNSRIEDTIIGDGVEVQSSTIIHSKVGNFTHIGPYAYLRPNSNIGEHVKIGDFVEVKNSNIGDHSKASHLAYIGDADVGQNVNIGCGVVFVNYDGKNKHRTTVEDNSFVGSNSNLIAPVTVKESGYVACGSTITKDVPEGSLAVARARQENKEGWTKRKGLLKK</sequence>
<protein>
    <recommendedName>
        <fullName evidence="1">Bifunctional protein GlmU</fullName>
    </recommendedName>
    <domain>
        <recommendedName>
            <fullName evidence="1">UDP-N-acetylglucosamine pyrophosphorylase</fullName>
            <ecNumber evidence="1">2.7.7.23</ecNumber>
        </recommendedName>
        <alternativeName>
            <fullName evidence="1">N-acetylglucosamine-1-phosphate uridyltransferase</fullName>
        </alternativeName>
    </domain>
    <domain>
        <recommendedName>
            <fullName evidence="1">Glucosamine-1-phosphate N-acetyltransferase</fullName>
            <ecNumber evidence="1">2.3.1.157</ecNumber>
        </recommendedName>
    </domain>
</protein>
<name>GLMU_ALKOO</name>
<dbReference type="EC" id="2.7.7.23" evidence="1"/>
<dbReference type="EC" id="2.3.1.157" evidence="1"/>
<dbReference type="EMBL" id="CP000853">
    <property type="protein sequence ID" value="ABW20177.1"/>
    <property type="molecule type" value="Genomic_DNA"/>
</dbReference>
<dbReference type="RefSeq" id="WP_012160484.1">
    <property type="nucleotide sequence ID" value="NC_009922.1"/>
</dbReference>
<dbReference type="SMR" id="A8MK45"/>
<dbReference type="STRING" id="350688.Clos_2646"/>
<dbReference type="KEGG" id="aoe:Clos_2646"/>
<dbReference type="eggNOG" id="COG1207">
    <property type="taxonomic scope" value="Bacteria"/>
</dbReference>
<dbReference type="HOGENOM" id="CLU_029499_15_2_9"/>
<dbReference type="OrthoDB" id="9775031at2"/>
<dbReference type="UniPathway" id="UPA00113">
    <property type="reaction ID" value="UER00532"/>
</dbReference>
<dbReference type="UniPathway" id="UPA00113">
    <property type="reaction ID" value="UER00533"/>
</dbReference>
<dbReference type="UniPathway" id="UPA00973"/>
<dbReference type="Proteomes" id="UP000000269">
    <property type="component" value="Chromosome"/>
</dbReference>
<dbReference type="GO" id="GO:0005737">
    <property type="term" value="C:cytoplasm"/>
    <property type="evidence" value="ECO:0007669"/>
    <property type="project" value="UniProtKB-SubCell"/>
</dbReference>
<dbReference type="GO" id="GO:0016020">
    <property type="term" value="C:membrane"/>
    <property type="evidence" value="ECO:0007669"/>
    <property type="project" value="GOC"/>
</dbReference>
<dbReference type="GO" id="GO:0019134">
    <property type="term" value="F:glucosamine-1-phosphate N-acetyltransferase activity"/>
    <property type="evidence" value="ECO:0007669"/>
    <property type="project" value="UniProtKB-UniRule"/>
</dbReference>
<dbReference type="GO" id="GO:0000287">
    <property type="term" value="F:magnesium ion binding"/>
    <property type="evidence" value="ECO:0007669"/>
    <property type="project" value="UniProtKB-UniRule"/>
</dbReference>
<dbReference type="GO" id="GO:0003977">
    <property type="term" value="F:UDP-N-acetylglucosamine diphosphorylase activity"/>
    <property type="evidence" value="ECO:0007669"/>
    <property type="project" value="UniProtKB-UniRule"/>
</dbReference>
<dbReference type="GO" id="GO:0000902">
    <property type="term" value="P:cell morphogenesis"/>
    <property type="evidence" value="ECO:0007669"/>
    <property type="project" value="UniProtKB-UniRule"/>
</dbReference>
<dbReference type="GO" id="GO:0071555">
    <property type="term" value="P:cell wall organization"/>
    <property type="evidence" value="ECO:0007669"/>
    <property type="project" value="UniProtKB-KW"/>
</dbReference>
<dbReference type="GO" id="GO:0009245">
    <property type="term" value="P:lipid A biosynthetic process"/>
    <property type="evidence" value="ECO:0007669"/>
    <property type="project" value="UniProtKB-UniRule"/>
</dbReference>
<dbReference type="GO" id="GO:0009252">
    <property type="term" value="P:peptidoglycan biosynthetic process"/>
    <property type="evidence" value="ECO:0007669"/>
    <property type="project" value="UniProtKB-UniRule"/>
</dbReference>
<dbReference type="GO" id="GO:0008360">
    <property type="term" value="P:regulation of cell shape"/>
    <property type="evidence" value="ECO:0007669"/>
    <property type="project" value="UniProtKB-KW"/>
</dbReference>
<dbReference type="GO" id="GO:0006048">
    <property type="term" value="P:UDP-N-acetylglucosamine biosynthetic process"/>
    <property type="evidence" value="ECO:0007669"/>
    <property type="project" value="UniProtKB-UniPathway"/>
</dbReference>
<dbReference type="CDD" id="cd02540">
    <property type="entry name" value="GT2_GlmU_N_bac"/>
    <property type="match status" value="1"/>
</dbReference>
<dbReference type="CDD" id="cd03353">
    <property type="entry name" value="LbH_GlmU_C"/>
    <property type="match status" value="1"/>
</dbReference>
<dbReference type="Gene3D" id="2.160.10.10">
    <property type="entry name" value="Hexapeptide repeat proteins"/>
    <property type="match status" value="1"/>
</dbReference>
<dbReference type="Gene3D" id="3.90.550.10">
    <property type="entry name" value="Spore Coat Polysaccharide Biosynthesis Protein SpsA, Chain A"/>
    <property type="match status" value="1"/>
</dbReference>
<dbReference type="HAMAP" id="MF_01631">
    <property type="entry name" value="GlmU"/>
    <property type="match status" value="1"/>
</dbReference>
<dbReference type="InterPro" id="IPR005882">
    <property type="entry name" value="Bifunctional_GlmU"/>
</dbReference>
<dbReference type="InterPro" id="IPR050065">
    <property type="entry name" value="GlmU-like"/>
</dbReference>
<dbReference type="InterPro" id="IPR038009">
    <property type="entry name" value="GlmU_C_LbH"/>
</dbReference>
<dbReference type="InterPro" id="IPR001451">
    <property type="entry name" value="Hexapep"/>
</dbReference>
<dbReference type="InterPro" id="IPR005835">
    <property type="entry name" value="NTP_transferase_dom"/>
</dbReference>
<dbReference type="InterPro" id="IPR029044">
    <property type="entry name" value="Nucleotide-diphossugar_trans"/>
</dbReference>
<dbReference type="InterPro" id="IPR011004">
    <property type="entry name" value="Trimer_LpxA-like_sf"/>
</dbReference>
<dbReference type="NCBIfam" id="TIGR01173">
    <property type="entry name" value="glmU"/>
    <property type="match status" value="1"/>
</dbReference>
<dbReference type="NCBIfam" id="NF010934">
    <property type="entry name" value="PRK14354.1"/>
    <property type="match status" value="1"/>
</dbReference>
<dbReference type="PANTHER" id="PTHR43584:SF3">
    <property type="entry name" value="BIFUNCTIONAL PROTEIN GLMU"/>
    <property type="match status" value="1"/>
</dbReference>
<dbReference type="PANTHER" id="PTHR43584">
    <property type="entry name" value="NUCLEOTIDYL TRANSFERASE"/>
    <property type="match status" value="1"/>
</dbReference>
<dbReference type="Pfam" id="PF00132">
    <property type="entry name" value="Hexapep"/>
    <property type="match status" value="1"/>
</dbReference>
<dbReference type="Pfam" id="PF00483">
    <property type="entry name" value="NTP_transferase"/>
    <property type="match status" value="1"/>
</dbReference>
<dbReference type="SUPFAM" id="SSF53448">
    <property type="entry name" value="Nucleotide-diphospho-sugar transferases"/>
    <property type="match status" value="1"/>
</dbReference>
<dbReference type="SUPFAM" id="SSF51161">
    <property type="entry name" value="Trimeric LpxA-like enzymes"/>
    <property type="match status" value="1"/>
</dbReference>
<reference key="1">
    <citation type="submission" date="2007-10" db="EMBL/GenBank/DDBJ databases">
        <title>Complete genome of Alkaliphilus oremlandii OhILAs.</title>
        <authorList>
            <person name="Copeland A."/>
            <person name="Lucas S."/>
            <person name="Lapidus A."/>
            <person name="Barry K."/>
            <person name="Detter J.C."/>
            <person name="Glavina del Rio T."/>
            <person name="Hammon N."/>
            <person name="Israni S."/>
            <person name="Dalin E."/>
            <person name="Tice H."/>
            <person name="Pitluck S."/>
            <person name="Chain P."/>
            <person name="Malfatti S."/>
            <person name="Shin M."/>
            <person name="Vergez L."/>
            <person name="Schmutz J."/>
            <person name="Larimer F."/>
            <person name="Land M."/>
            <person name="Hauser L."/>
            <person name="Kyrpides N."/>
            <person name="Mikhailova N."/>
            <person name="Stolz J.F."/>
            <person name="Dawson A."/>
            <person name="Fisher E."/>
            <person name="Crable B."/>
            <person name="Perera E."/>
            <person name="Lisak J."/>
            <person name="Ranganathan M."/>
            <person name="Basu P."/>
            <person name="Richardson P."/>
        </authorList>
    </citation>
    <scope>NUCLEOTIDE SEQUENCE [LARGE SCALE GENOMIC DNA]</scope>
    <source>
        <strain>OhILAs</strain>
    </source>
</reference>
<keyword id="KW-0012">Acyltransferase</keyword>
<keyword id="KW-0133">Cell shape</keyword>
<keyword id="KW-0961">Cell wall biogenesis/degradation</keyword>
<keyword id="KW-0963">Cytoplasm</keyword>
<keyword id="KW-0460">Magnesium</keyword>
<keyword id="KW-0479">Metal-binding</keyword>
<keyword id="KW-0511">Multifunctional enzyme</keyword>
<keyword id="KW-0548">Nucleotidyltransferase</keyword>
<keyword id="KW-0573">Peptidoglycan synthesis</keyword>
<keyword id="KW-1185">Reference proteome</keyword>
<keyword id="KW-0677">Repeat</keyword>
<keyword id="KW-0808">Transferase</keyword>
<proteinExistence type="inferred from homology"/>
<comment type="function">
    <text evidence="1">Catalyzes the last two sequential reactions in the de novo biosynthetic pathway for UDP-N-acetylglucosamine (UDP-GlcNAc). The C-terminal domain catalyzes the transfer of acetyl group from acetyl coenzyme A to glucosamine-1-phosphate (GlcN-1-P) to produce N-acetylglucosamine-1-phosphate (GlcNAc-1-P), which is converted into UDP-GlcNAc by the transfer of uridine 5-monophosphate (from uridine 5-triphosphate), a reaction catalyzed by the N-terminal domain.</text>
</comment>
<comment type="catalytic activity">
    <reaction evidence="1">
        <text>alpha-D-glucosamine 1-phosphate + acetyl-CoA = N-acetyl-alpha-D-glucosamine 1-phosphate + CoA + H(+)</text>
        <dbReference type="Rhea" id="RHEA:13725"/>
        <dbReference type="ChEBI" id="CHEBI:15378"/>
        <dbReference type="ChEBI" id="CHEBI:57287"/>
        <dbReference type="ChEBI" id="CHEBI:57288"/>
        <dbReference type="ChEBI" id="CHEBI:57776"/>
        <dbReference type="ChEBI" id="CHEBI:58516"/>
        <dbReference type="EC" id="2.3.1.157"/>
    </reaction>
</comment>
<comment type="catalytic activity">
    <reaction evidence="1">
        <text>N-acetyl-alpha-D-glucosamine 1-phosphate + UTP + H(+) = UDP-N-acetyl-alpha-D-glucosamine + diphosphate</text>
        <dbReference type="Rhea" id="RHEA:13509"/>
        <dbReference type="ChEBI" id="CHEBI:15378"/>
        <dbReference type="ChEBI" id="CHEBI:33019"/>
        <dbReference type="ChEBI" id="CHEBI:46398"/>
        <dbReference type="ChEBI" id="CHEBI:57705"/>
        <dbReference type="ChEBI" id="CHEBI:57776"/>
        <dbReference type="EC" id="2.7.7.23"/>
    </reaction>
</comment>
<comment type="cofactor">
    <cofactor evidence="1">
        <name>Mg(2+)</name>
        <dbReference type="ChEBI" id="CHEBI:18420"/>
    </cofactor>
    <text evidence="1">Binds 1 Mg(2+) ion per subunit.</text>
</comment>
<comment type="pathway">
    <text evidence="1">Nucleotide-sugar biosynthesis; UDP-N-acetyl-alpha-D-glucosamine biosynthesis; N-acetyl-alpha-D-glucosamine 1-phosphate from alpha-D-glucosamine 6-phosphate (route II): step 2/2.</text>
</comment>
<comment type="pathway">
    <text evidence="1">Nucleotide-sugar biosynthesis; UDP-N-acetyl-alpha-D-glucosamine biosynthesis; UDP-N-acetyl-alpha-D-glucosamine from N-acetyl-alpha-D-glucosamine 1-phosphate: step 1/1.</text>
</comment>
<comment type="pathway">
    <text evidence="1">Bacterial outer membrane biogenesis; LPS lipid A biosynthesis.</text>
</comment>
<comment type="subunit">
    <text evidence="1">Homotrimer.</text>
</comment>
<comment type="subcellular location">
    <subcellularLocation>
        <location evidence="1">Cytoplasm</location>
    </subcellularLocation>
</comment>
<comment type="similarity">
    <text evidence="1">In the N-terminal section; belongs to the N-acetylglucosamine-1-phosphate uridyltransferase family.</text>
</comment>
<comment type="similarity">
    <text evidence="1">In the C-terminal section; belongs to the transferase hexapeptide repeat family.</text>
</comment>
<feature type="chain" id="PRO_1000069729" description="Bifunctional protein GlmU">
    <location>
        <begin position="1"/>
        <end position="455"/>
    </location>
</feature>
<feature type="region of interest" description="Pyrophosphorylase" evidence="1">
    <location>
        <begin position="1"/>
        <end position="227"/>
    </location>
</feature>
<feature type="region of interest" description="Linker" evidence="1">
    <location>
        <begin position="228"/>
        <end position="248"/>
    </location>
</feature>
<feature type="region of interest" description="N-acetyltransferase" evidence="1">
    <location>
        <begin position="249"/>
        <end position="455"/>
    </location>
</feature>
<feature type="active site" description="Proton acceptor" evidence="1">
    <location>
        <position position="360"/>
    </location>
</feature>
<feature type="binding site" evidence="1">
    <location>
        <begin position="8"/>
        <end position="11"/>
    </location>
    <ligand>
        <name>UDP-N-acetyl-alpha-D-glucosamine</name>
        <dbReference type="ChEBI" id="CHEBI:57705"/>
    </ligand>
</feature>
<feature type="binding site" evidence="1">
    <location>
        <position position="22"/>
    </location>
    <ligand>
        <name>UDP-N-acetyl-alpha-D-glucosamine</name>
        <dbReference type="ChEBI" id="CHEBI:57705"/>
    </ligand>
</feature>
<feature type="binding site" evidence="1">
    <location>
        <position position="72"/>
    </location>
    <ligand>
        <name>UDP-N-acetyl-alpha-D-glucosamine</name>
        <dbReference type="ChEBI" id="CHEBI:57705"/>
    </ligand>
</feature>
<feature type="binding site" evidence="1">
    <location>
        <begin position="77"/>
        <end position="78"/>
    </location>
    <ligand>
        <name>UDP-N-acetyl-alpha-D-glucosamine</name>
        <dbReference type="ChEBI" id="CHEBI:57705"/>
    </ligand>
</feature>
<feature type="binding site" evidence="1">
    <location>
        <position position="100"/>
    </location>
    <ligand>
        <name>Mg(2+)</name>
        <dbReference type="ChEBI" id="CHEBI:18420"/>
    </ligand>
</feature>
<feature type="binding site" evidence="1">
    <location>
        <position position="137"/>
    </location>
    <ligand>
        <name>UDP-N-acetyl-alpha-D-glucosamine</name>
        <dbReference type="ChEBI" id="CHEBI:57705"/>
    </ligand>
</feature>
<feature type="binding site" evidence="1">
    <location>
        <position position="152"/>
    </location>
    <ligand>
        <name>UDP-N-acetyl-alpha-D-glucosamine</name>
        <dbReference type="ChEBI" id="CHEBI:57705"/>
    </ligand>
</feature>
<feature type="binding site" evidence="1">
    <location>
        <position position="167"/>
    </location>
    <ligand>
        <name>UDP-N-acetyl-alpha-D-glucosamine</name>
        <dbReference type="ChEBI" id="CHEBI:57705"/>
    </ligand>
</feature>
<feature type="binding site" evidence="1">
    <location>
        <position position="225"/>
    </location>
    <ligand>
        <name>Mg(2+)</name>
        <dbReference type="ChEBI" id="CHEBI:18420"/>
    </ligand>
</feature>
<feature type="binding site" evidence="1">
    <location>
        <position position="225"/>
    </location>
    <ligand>
        <name>UDP-N-acetyl-alpha-D-glucosamine</name>
        <dbReference type="ChEBI" id="CHEBI:57705"/>
    </ligand>
</feature>
<feature type="binding site" evidence="1">
    <location>
        <position position="330"/>
    </location>
    <ligand>
        <name>UDP-N-acetyl-alpha-D-glucosamine</name>
        <dbReference type="ChEBI" id="CHEBI:57705"/>
    </ligand>
</feature>
<feature type="binding site" evidence="1">
    <location>
        <position position="348"/>
    </location>
    <ligand>
        <name>UDP-N-acetyl-alpha-D-glucosamine</name>
        <dbReference type="ChEBI" id="CHEBI:57705"/>
    </ligand>
</feature>
<feature type="binding site" evidence="1">
    <location>
        <position position="363"/>
    </location>
    <ligand>
        <name>UDP-N-acetyl-alpha-D-glucosamine</name>
        <dbReference type="ChEBI" id="CHEBI:57705"/>
    </ligand>
</feature>
<feature type="binding site" evidence="1">
    <location>
        <position position="374"/>
    </location>
    <ligand>
        <name>UDP-N-acetyl-alpha-D-glucosamine</name>
        <dbReference type="ChEBI" id="CHEBI:57705"/>
    </ligand>
</feature>
<feature type="binding site" evidence="1">
    <location>
        <begin position="383"/>
        <end position="384"/>
    </location>
    <ligand>
        <name>acetyl-CoA</name>
        <dbReference type="ChEBI" id="CHEBI:57288"/>
    </ligand>
</feature>
<feature type="binding site" evidence="1">
    <location>
        <position position="402"/>
    </location>
    <ligand>
        <name>acetyl-CoA</name>
        <dbReference type="ChEBI" id="CHEBI:57288"/>
    </ligand>
</feature>
<feature type="binding site" evidence="1">
    <location>
        <position position="420"/>
    </location>
    <ligand>
        <name>acetyl-CoA</name>
        <dbReference type="ChEBI" id="CHEBI:57288"/>
    </ligand>
</feature>
<feature type="binding site" evidence="1">
    <location>
        <position position="437"/>
    </location>
    <ligand>
        <name>acetyl-CoA</name>
        <dbReference type="ChEBI" id="CHEBI:57288"/>
    </ligand>
</feature>
<organism>
    <name type="scientific">Alkaliphilus oremlandii (strain OhILAs)</name>
    <name type="common">Clostridium oremlandii (strain OhILAs)</name>
    <dbReference type="NCBI Taxonomy" id="350688"/>
    <lineage>
        <taxon>Bacteria</taxon>
        <taxon>Bacillati</taxon>
        <taxon>Bacillota</taxon>
        <taxon>Clostridia</taxon>
        <taxon>Peptostreptococcales</taxon>
        <taxon>Natronincolaceae</taxon>
        <taxon>Alkaliphilus</taxon>
    </lineage>
</organism>
<gene>
    <name evidence="1" type="primary">glmU</name>
    <name type="ordered locus">Clos_2646</name>
</gene>
<evidence type="ECO:0000255" key="1">
    <source>
        <dbReference type="HAMAP-Rule" id="MF_01631"/>
    </source>
</evidence>